<reference key="1">
    <citation type="journal article" date="2006" name="Nat. Biotechnol.">
        <title>Complete genome of the mutualistic, N2-fixing grass endophyte Azoarcus sp. strain BH72.</title>
        <authorList>
            <person name="Krause A."/>
            <person name="Ramakumar A."/>
            <person name="Bartels D."/>
            <person name="Battistoni F."/>
            <person name="Bekel T."/>
            <person name="Boch J."/>
            <person name="Boehm M."/>
            <person name="Friedrich F."/>
            <person name="Hurek T."/>
            <person name="Krause L."/>
            <person name="Linke B."/>
            <person name="McHardy A.C."/>
            <person name="Sarkar A."/>
            <person name="Schneiker S."/>
            <person name="Syed A.A."/>
            <person name="Thauer R."/>
            <person name="Vorhoelter F.-J."/>
            <person name="Weidner S."/>
            <person name="Puehler A."/>
            <person name="Reinhold-Hurek B."/>
            <person name="Kaiser O."/>
            <person name="Goesmann A."/>
        </authorList>
    </citation>
    <scope>NUCLEOTIDE SEQUENCE [LARGE SCALE GENOMIC DNA]</scope>
    <source>
        <strain>BH72</strain>
    </source>
</reference>
<name>EFG_AZOSB</name>
<accession>A1KB30</accession>
<protein>
    <recommendedName>
        <fullName evidence="1">Elongation factor G</fullName>
        <shortName evidence="1">EF-G</shortName>
    </recommendedName>
</protein>
<proteinExistence type="inferred from homology"/>
<keyword id="KW-0963">Cytoplasm</keyword>
<keyword id="KW-0251">Elongation factor</keyword>
<keyword id="KW-0342">GTP-binding</keyword>
<keyword id="KW-0547">Nucleotide-binding</keyword>
<keyword id="KW-0648">Protein biosynthesis</keyword>
<keyword id="KW-1185">Reference proteome</keyword>
<comment type="function">
    <text evidence="1">Catalyzes the GTP-dependent ribosomal translocation step during translation elongation. During this step, the ribosome changes from the pre-translocational (PRE) to the post-translocational (POST) state as the newly formed A-site-bound peptidyl-tRNA and P-site-bound deacylated tRNA move to the P and E sites, respectively. Catalyzes the coordinated movement of the two tRNA molecules, the mRNA and conformational changes in the ribosome.</text>
</comment>
<comment type="subcellular location">
    <subcellularLocation>
        <location evidence="1">Cytoplasm</location>
    </subcellularLocation>
</comment>
<comment type="similarity">
    <text evidence="1">Belongs to the TRAFAC class translation factor GTPase superfamily. Classic translation factor GTPase family. EF-G/EF-2 subfamily.</text>
</comment>
<sequence>MARKTPIERYRNIGISAHIDAGKTTTTERILYYTGVNHKIGEVHDGAATMDWMAQEQERGITITSAATTCFWKGMDLNFPEHRFNIIDTPGHVDFTIEVERSMRVLDGACMVYCAVGGVQPQSETVWRQATKYKVPRLAFVNKMDRSGANFYKVVDQMKMRLKANPVPIVLPIGAEEGFKGVVDLIKMKAIIWDEASQGMKFEYQDIPAELQGDAETWREQMVEAAAEANEDLMNEYLENGDLSEEKIKLGLRTRTIACEIQPMLCGTAFKNKGVQRMLDAVIEFLPSPVDIPPVAGVDDNEKEVTRKADDKEKFAALAFKLMTDPFVGQLTFVRVYSGVLNSGETVLNSVKNKKERIGRILQMHANEREEIKEVLAGDIAACVGLKEVTTGETLCDPSAPIILERMVFPDPVIHVAVEPKTKGDQEKMGIALGRLAAEDPSFRVRTDEESGQTIISGMGELHLEIIVDRMKREFNVEANVGAPQVAYREAIRKAVEQEGKFVKQSGGRGQYGHVWIKLEPNETGKGYEFVDAIKGGVVPREYIPAVDKGLQETLPNGVLAGFPVVDVKVTLFDGSYHDVDSNENAFKMAASMAFKDAMRKANPILLEPMMAVVVETPEDYMGNVMGDLSGRRGIVQGMDDLPGGMKEIKAEVPLAEMFGYATQLRSLTQGRATYSMEFKHYSEAPKSVAEAVISNRK</sequence>
<gene>
    <name evidence="1" type="primary">fusA</name>
    <name type="ordered locus">azo3420</name>
</gene>
<evidence type="ECO:0000255" key="1">
    <source>
        <dbReference type="HAMAP-Rule" id="MF_00054"/>
    </source>
</evidence>
<feature type="chain" id="PRO_1000008801" description="Elongation factor G">
    <location>
        <begin position="1"/>
        <end position="698"/>
    </location>
</feature>
<feature type="domain" description="tr-type G">
    <location>
        <begin position="8"/>
        <end position="290"/>
    </location>
</feature>
<feature type="binding site" evidence="1">
    <location>
        <begin position="17"/>
        <end position="24"/>
    </location>
    <ligand>
        <name>GTP</name>
        <dbReference type="ChEBI" id="CHEBI:37565"/>
    </ligand>
</feature>
<feature type="binding site" evidence="1">
    <location>
        <begin position="88"/>
        <end position="92"/>
    </location>
    <ligand>
        <name>GTP</name>
        <dbReference type="ChEBI" id="CHEBI:37565"/>
    </ligand>
</feature>
<feature type="binding site" evidence="1">
    <location>
        <begin position="142"/>
        <end position="145"/>
    </location>
    <ligand>
        <name>GTP</name>
        <dbReference type="ChEBI" id="CHEBI:37565"/>
    </ligand>
</feature>
<dbReference type="EMBL" id="AM406670">
    <property type="protein sequence ID" value="CAL96036.1"/>
    <property type="molecule type" value="Genomic_DNA"/>
</dbReference>
<dbReference type="RefSeq" id="WP_011767143.1">
    <property type="nucleotide sequence ID" value="NC_008702.1"/>
</dbReference>
<dbReference type="SMR" id="A1KB30"/>
<dbReference type="STRING" id="62928.azo3420"/>
<dbReference type="KEGG" id="aoa:dqs_3559"/>
<dbReference type="KEGG" id="azo:azo3420"/>
<dbReference type="eggNOG" id="COG0480">
    <property type="taxonomic scope" value="Bacteria"/>
</dbReference>
<dbReference type="HOGENOM" id="CLU_002794_4_1_4"/>
<dbReference type="OrthoDB" id="9804431at2"/>
<dbReference type="Proteomes" id="UP000002588">
    <property type="component" value="Chromosome"/>
</dbReference>
<dbReference type="GO" id="GO:0005737">
    <property type="term" value="C:cytoplasm"/>
    <property type="evidence" value="ECO:0007669"/>
    <property type="project" value="UniProtKB-SubCell"/>
</dbReference>
<dbReference type="GO" id="GO:0005525">
    <property type="term" value="F:GTP binding"/>
    <property type="evidence" value="ECO:0007669"/>
    <property type="project" value="UniProtKB-UniRule"/>
</dbReference>
<dbReference type="GO" id="GO:0003924">
    <property type="term" value="F:GTPase activity"/>
    <property type="evidence" value="ECO:0007669"/>
    <property type="project" value="InterPro"/>
</dbReference>
<dbReference type="GO" id="GO:0097216">
    <property type="term" value="F:guanosine tetraphosphate binding"/>
    <property type="evidence" value="ECO:0007669"/>
    <property type="project" value="UniProtKB-ARBA"/>
</dbReference>
<dbReference type="GO" id="GO:0003746">
    <property type="term" value="F:translation elongation factor activity"/>
    <property type="evidence" value="ECO:0007669"/>
    <property type="project" value="UniProtKB-UniRule"/>
</dbReference>
<dbReference type="GO" id="GO:0032790">
    <property type="term" value="P:ribosome disassembly"/>
    <property type="evidence" value="ECO:0007669"/>
    <property type="project" value="TreeGrafter"/>
</dbReference>
<dbReference type="CDD" id="cd01886">
    <property type="entry name" value="EF-G"/>
    <property type="match status" value="1"/>
</dbReference>
<dbReference type="CDD" id="cd16262">
    <property type="entry name" value="EFG_III"/>
    <property type="match status" value="1"/>
</dbReference>
<dbReference type="CDD" id="cd01434">
    <property type="entry name" value="EFG_mtEFG1_IV"/>
    <property type="match status" value="1"/>
</dbReference>
<dbReference type="CDD" id="cd03713">
    <property type="entry name" value="EFG_mtEFG_C"/>
    <property type="match status" value="1"/>
</dbReference>
<dbReference type="CDD" id="cd04088">
    <property type="entry name" value="EFG_mtEFG_II"/>
    <property type="match status" value="1"/>
</dbReference>
<dbReference type="FunFam" id="2.40.30.10:FF:000006">
    <property type="entry name" value="Elongation factor G"/>
    <property type="match status" value="1"/>
</dbReference>
<dbReference type="FunFam" id="3.30.230.10:FF:000003">
    <property type="entry name" value="Elongation factor G"/>
    <property type="match status" value="1"/>
</dbReference>
<dbReference type="FunFam" id="3.30.70.240:FF:000001">
    <property type="entry name" value="Elongation factor G"/>
    <property type="match status" value="1"/>
</dbReference>
<dbReference type="FunFam" id="3.30.70.870:FF:000001">
    <property type="entry name" value="Elongation factor G"/>
    <property type="match status" value="1"/>
</dbReference>
<dbReference type="FunFam" id="3.40.50.300:FF:000029">
    <property type="entry name" value="Elongation factor G"/>
    <property type="match status" value="1"/>
</dbReference>
<dbReference type="Gene3D" id="3.30.230.10">
    <property type="match status" value="1"/>
</dbReference>
<dbReference type="Gene3D" id="3.30.70.240">
    <property type="match status" value="1"/>
</dbReference>
<dbReference type="Gene3D" id="3.30.70.870">
    <property type="entry name" value="Elongation Factor G (Translational Gtpase), domain 3"/>
    <property type="match status" value="1"/>
</dbReference>
<dbReference type="Gene3D" id="3.40.50.300">
    <property type="entry name" value="P-loop containing nucleotide triphosphate hydrolases"/>
    <property type="match status" value="1"/>
</dbReference>
<dbReference type="Gene3D" id="2.40.30.10">
    <property type="entry name" value="Translation factors"/>
    <property type="match status" value="1"/>
</dbReference>
<dbReference type="HAMAP" id="MF_00054_B">
    <property type="entry name" value="EF_G_EF_2_B"/>
    <property type="match status" value="1"/>
</dbReference>
<dbReference type="InterPro" id="IPR041095">
    <property type="entry name" value="EFG_II"/>
</dbReference>
<dbReference type="InterPro" id="IPR009022">
    <property type="entry name" value="EFG_III"/>
</dbReference>
<dbReference type="InterPro" id="IPR035647">
    <property type="entry name" value="EFG_III/V"/>
</dbReference>
<dbReference type="InterPro" id="IPR047872">
    <property type="entry name" value="EFG_IV"/>
</dbReference>
<dbReference type="InterPro" id="IPR035649">
    <property type="entry name" value="EFG_V"/>
</dbReference>
<dbReference type="InterPro" id="IPR000640">
    <property type="entry name" value="EFG_V-like"/>
</dbReference>
<dbReference type="InterPro" id="IPR004161">
    <property type="entry name" value="EFTu-like_2"/>
</dbReference>
<dbReference type="InterPro" id="IPR031157">
    <property type="entry name" value="G_TR_CS"/>
</dbReference>
<dbReference type="InterPro" id="IPR027417">
    <property type="entry name" value="P-loop_NTPase"/>
</dbReference>
<dbReference type="InterPro" id="IPR020568">
    <property type="entry name" value="Ribosomal_Su5_D2-typ_SF"/>
</dbReference>
<dbReference type="InterPro" id="IPR014721">
    <property type="entry name" value="Ribsml_uS5_D2-typ_fold_subgr"/>
</dbReference>
<dbReference type="InterPro" id="IPR005225">
    <property type="entry name" value="Small_GTP-bd"/>
</dbReference>
<dbReference type="InterPro" id="IPR000795">
    <property type="entry name" value="T_Tr_GTP-bd_dom"/>
</dbReference>
<dbReference type="InterPro" id="IPR009000">
    <property type="entry name" value="Transl_B-barrel_sf"/>
</dbReference>
<dbReference type="InterPro" id="IPR004540">
    <property type="entry name" value="Transl_elong_EFG/EF2"/>
</dbReference>
<dbReference type="InterPro" id="IPR005517">
    <property type="entry name" value="Transl_elong_EFG/EF2_IV"/>
</dbReference>
<dbReference type="NCBIfam" id="TIGR00484">
    <property type="entry name" value="EF-G"/>
    <property type="match status" value="1"/>
</dbReference>
<dbReference type="NCBIfam" id="NF009381">
    <property type="entry name" value="PRK12740.1-5"/>
    <property type="match status" value="1"/>
</dbReference>
<dbReference type="NCBIfam" id="TIGR00231">
    <property type="entry name" value="small_GTP"/>
    <property type="match status" value="1"/>
</dbReference>
<dbReference type="PANTHER" id="PTHR43261:SF1">
    <property type="entry name" value="RIBOSOME-RELEASING FACTOR 2, MITOCHONDRIAL"/>
    <property type="match status" value="1"/>
</dbReference>
<dbReference type="PANTHER" id="PTHR43261">
    <property type="entry name" value="TRANSLATION ELONGATION FACTOR G-RELATED"/>
    <property type="match status" value="1"/>
</dbReference>
<dbReference type="Pfam" id="PF00679">
    <property type="entry name" value="EFG_C"/>
    <property type="match status" value="1"/>
</dbReference>
<dbReference type="Pfam" id="PF14492">
    <property type="entry name" value="EFG_III"/>
    <property type="match status" value="1"/>
</dbReference>
<dbReference type="Pfam" id="PF03764">
    <property type="entry name" value="EFG_IV"/>
    <property type="match status" value="1"/>
</dbReference>
<dbReference type="Pfam" id="PF00009">
    <property type="entry name" value="GTP_EFTU"/>
    <property type="match status" value="1"/>
</dbReference>
<dbReference type="Pfam" id="PF03144">
    <property type="entry name" value="GTP_EFTU_D2"/>
    <property type="match status" value="1"/>
</dbReference>
<dbReference type="PRINTS" id="PR00315">
    <property type="entry name" value="ELONGATNFCT"/>
</dbReference>
<dbReference type="SMART" id="SM00838">
    <property type="entry name" value="EFG_C"/>
    <property type="match status" value="1"/>
</dbReference>
<dbReference type="SMART" id="SM00889">
    <property type="entry name" value="EFG_IV"/>
    <property type="match status" value="1"/>
</dbReference>
<dbReference type="SUPFAM" id="SSF54980">
    <property type="entry name" value="EF-G C-terminal domain-like"/>
    <property type="match status" value="2"/>
</dbReference>
<dbReference type="SUPFAM" id="SSF52540">
    <property type="entry name" value="P-loop containing nucleoside triphosphate hydrolases"/>
    <property type="match status" value="1"/>
</dbReference>
<dbReference type="SUPFAM" id="SSF54211">
    <property type="entry name" value="Ribosomal protein S5 domain 2-like"/>
    <property type="match status" value="1"/>
</dbReference>
<dbReference type="SUPFAM" id="SSF50447">
    <property type="entry name" value="Translation proteins"/>
    <property type="match status" value="1"/>
</dbReference>
<dbReference type="PROSITE" id="PS00301">
    <property type="entry name" value="G_TR_1"/>
    <property type="match status" value="1"/>
</dbReference>
<dbReference type="PROSITE" id="PS51722">
    <property type="entry name" value="G_TR_2"/>
    <property type="match status" value="1"/>
</dbReference>
<organism>
    <name type="scientific">Azoarcus sp. (strain BH72)</name>
    <dbReference type="NCBI Taxonomy" id="418699"/>
    <lineage>
        <taxon>Bacteria</taxon>
        <taxon>Pseudomonadati</taxon>
        <taxon>Pseudomonadota</taxon>
        <taxon>Betaproteobacteria</taxon>
        <taxon>Rhodocyclales</taxon>
        <taxon>Zoogloeaceae</taxon>
        <taxon>Azoarcus</taxon>
    </lineage>
</organism>